<dbReference type="EC" id="3.6.5.-" evidence="1"/>
<dbReference type="EMBL" id="X57980">
    <property type="protein sequence ID" value="CAA41045.1"/>
    <property type="molecule type" value="mRNA"/>
</dbReference>
<dbReference type="PIR" id="S20865">
    <property type="entry name" value="S20865"/>
</dbReference>
<dbReference type="SMR" id="P33628"/>
<dbReference type="GO" id="GO:0005737">
    <property type="term" value="C:cytoplasm"/>
    <property type="evidence" value="ECO:0007669"/>
    <property type="project" value="UniProtKB-KW"/>
</dbReference>
<dbReference type="GO" id="GO:0005874">
    <property type="term" value="C:microtubule"/>
    <property type="evidence" value="ECO:0007669"/>
    <property type="project" value="UniProtKB-KW"/>
</dbReference>
<dbReference type="GO" id="GO:0005525">
    <property type="term" value="F:GTP binding"/>
    <property type="evidence" value="ECO:0007669"/>
    <property type="project" value="UniProtKB-KW"/>
</dbReference>
<dbReference type="GO" id="GO:0016787">
    <property type="term" value="F:hydrolase activity"/>
    <property type="evidence" value="ECO:0007669"/>
    <property type="project" value="UniProtKB-KW"/>
</dbReference>
<dbReference type="GO" id="GO:0046872">
    <property type="term" value="F:metal ion binding"/>
    <property type="evidence" value="ECO:0007669"/>
    <property type="project" value="UniProtKB-KW"/>
</dbReference>
<dbReference type="GO" id="GO:0005200">
    <property type="term" value="F:structural constituent of cytoskeleton"/>
    <property type="evidence" value="ECO:0007669"/>
    <property type="project" value="InterPro"/>
</dbReference>
<dbReference type="GO" id="GO:0007017">
    <property type="term" value="P:microtubule-based process"/>
    <property type="evidence" value="ECO:0007669"/>
    <property type="project" value="InterPro"/>
</dbReference>
<dbReference type="FunFam" id="3.40.50.1440:FF:000078">
    <property type="entry name" value="Uncharacterized protein"/>
    <property type="match status" value="1"/>
</dbReference>
<dbReference type="Gene3D" id="3.40.50.1440">
    <property type="entry name" value="Tubulin/FtsZ, GTPase domain"/>
    <property type="match status" value="1"/>
</dbReference>
<dbReference type="InterPro" id="IPR002452">
    <property type="entry name" value="Alpha_tubulin"/>
</dbReference>
<dbReference type="InterPro" id="IPR000217">
    <property type="entry name" value="Tubulin"/>
</dbReference>
<dbReference type="InterPro" id="IPR036525">
    <property type="entry name" value="Tubulin/FtsZ_GTPase_sf"/>
</dbReference>
<dbReference type="InterPro" id="IPR003008">
    <property type="entry name" value="Tubulin_FtsZ_GTPase"/>
</dbReference>
<dbReference type="PANTHER" id="PTHR11588">
    <property type="entry name" value="TUBULIN"/>
    <property type="match status" value="1"/>
</dbReference>
<dbReference type="Pfam" id="PF00091">
    <property type="entry name" value="Tubulin"/>
    <property type="match status" value="1"/>
</dbReference>
<dbReference type="PRINTS" id="PR01162">
    <property type="entry name" value="ALPHATUBULIN"/>
</dbReference>
<dbReference type="PRINTS" id="PR01161">
    <property type="entry name" value="TUBULIN"/>
</dbReference>
<dbReference type="SUPFAM" id="SSF52490">
    <property type="entry name" value="Tubulin nucleotide-binding domain-like"/>
    <property type="match status" value="1"/>
</dbReference>
<feature type="chain" id="PRO_0000048216" description="Tubulin alpha chain">
    <location>
        <begin position="1" status="less than"/>
        <end position="113" status="greater than"/>
    </location>
</feature>
<feature type="binding site" evidence="1">
    <location>
        <position position="52"/>
    </location>
    <ligand>
        <name>GTP</name>
        <dbReference type="ChEBI" id="CHEBI:37565"/>
    </ligand>
</feature>
<feature type="binding site" evidence="1">
    <location>
        <position position="52"/>
    </location>
    <ligand>
        <name>Mg(2+)</name>
        <dbReference type="ChEBI" id="CHEBI:18420"/>
    </ligand>
</feature>
<feature type="non-terminal residue">
    <location>
        <position position="1"/>
    </location>
</feature>
<feature type="non-terminal residue">
    <location>
        <position position="113"/>
    </location>
</feature>
<reference key="1">
    <citation type="journal article" date="1992" name="Plant Mol. Biol.">
        <title>Differential gene expression during germination and after the induction of adventitious bud formation in Norway spruce embryos.</title>
        <authorList>
            <person name="Sundaas A."/>
            <person name="Tandre K."/>
            <person name="Holmstedt E."/>
            <person name="Engstroem P."/>
        </authorList>
    </citation>
    <scope>NUCLEOTIDE SEQUENCE [MRNA]</scope>
</reference>
<keyword id="KW-0963">Cytoplasm</keyword>
<keyword id="KW-0206">Cytoskeleton</keyword>
<keyword id="KW-0342">GTP-binding</keyword>
<keyword id="KW-0378">Hydrolase</keyword>
<keyword id="KW-0460">Magnesium</keyword>
<keyword id="KW-0479">Metal-binding</keyword>
<keyword id="KW-0493">Microtubule</keyword>
<keyword id="KW-0547">Nucleotide-binding</keyword>
<comment type="function">
    <text>Tubulin is the major constituent of microtubules, a cylinder consisting of laterally associated linear protofilaments composed of alpha- and beta-tubulin heterodimers. Microtubules grow by the addition of GTP-tubulin dimers to the microtubule end, where a stabilizing cap forms. Below the cap, tubulin dimers are in GDP-bound state, owing to GTPase activity of alpha-tubulin.</text>
</comment>
<comment type="catalytic activity">
    <reaction evidence="1">
        <text>GTP + H2O = GDP + phosphate + H(+)</text>
        <dbReference type="Rhea" id="RHEA:19669"/>
        <dbReference type="ChEBI" id="CHEBI:15377"/>
        <dbReference type="ChEBI" id="CHEBI:15378"/>
        <dbReference type="ChEBI" id="CHEBI:37565"/>
        <dbReference type="ChEBI" id="CHEBI:43474"/>
        <dbReference type="ChEBI" id="CHEBI:58189"/>
    </reaction>
    <physiologicalReaction direction="left-to-right" evidence="1">
        <dbReference type="Rhea" id="RHEA:19670"/>
    </physiologicalReaction>
</comment>
<comment type="cofactor">
    <cofactor evidence="1">
        <name>Mg(2+)</name>
        <dbReference type="ChEBI" id="CHEBI:18420"/>
    </cofactor>
</comment>
<comment type="subunit">
    <text>Dimer of alpha and beta chains. A typical microtubule is a hollow water-filled tube with an outer diameter of 25 nm and an inner diameter of 15 nM. Alpha-beta heterodimers associate head-to-tail to form protofilaments running lengthwise along the microtubule wall with the beta-tubulin subunit facing the microtubule plus end conferring a structural polarity. Microtubules usually have 13 protofilaments but different protofilament numbers can be found in some organisms and specialized cells.</text>
</comment>
<comment type="subcellular location">
    <subcellularLocation>
        <location>Cytoplasm</location>
        <location>Cytoskeleton</location>
    </subcellularLocation>
</comment>
<comment type="similarity">
    <text evidence="2">Belongs to the tubulin family.</text>
</comment>
<organism>
    <name type="scientific">Picea abies</name>
    <name type="common">Norway spruce</name>
    <name type="synonym">Picea excelsa</name>
    <dbReference type="NCBI Taxonomy" id="3329"/>
    <lineage>
        <taxon>Eukaryota</taxon>
        <taxon>Viridiplantae</taxon>
        <taxon>Streptophyta</taxon>
        <taxon>Embryophyta</taxon>
        <taxon>Tracheophyta</taxon>
        <taxon>Spermatophyta</taxon>
        <taxon>Pinopsida</taxon>
        <taxon>Pinidae</taxon>
        <taxon>Conifers I</taxon>
        <taxon>Pinales</taxon>
        <taxon>Pinaceae</taxon>
        <taxon>Picea</taxon>
    </lineage>
</organism>
<sequence>CWELYWLEHGIQPDGMMPSDTTVGVGDDAFNTFFSETGAGKHVPRAVFVDLEPTVIDEVRTGAYRQLFHPEQLISGKEDAANNFARGHYTVGEEIVDLCLDRVRKLADNCTGL</sequence>
<accession>P33628</accession>
<protein>
    <recommendedName>
        <fullName>Tubulin alpha chain</fullName>
        <ecNumber evidence="1">3.6.5.-</ecNumber>
    </recommendedName>
</protein>
<evidence type="ECO:0000250" key="1">
    <source>
        <dbReference type="UniProtKB" id="P68363"/>
    </source>
</evidence>
<evidence type="ECO:0000305" key="2"/>
<name>TBA_PICAB</name>
<gene>
    <name type="primary">TUBA</name>
</gene>
<proteinExistence type="evidence at transcript level"/>